<name>RR19_PINTH</name>
<protein>
    <recommendedName>
        <fullName evidence="2">Small ribosomal subunit protein uS19c</fullName>
    </recommendedName>
    <alternativeName>
        <fullName>30S ribosomal protein S19, chloroplastic</fullName>
    </alternativeName>
</protein>
<comment type="function">
    <text evidence="1">Protein S19 forms a complex with S13 that binds strongly to the 16S ribosomal RNA.</text>
</comment>
<comment type="subcellular location">
    <subcellularLocation>
        <location>Plastid</location>
        <location>Chloroplast</location>
    </subcellularLocation>
</comment>
<comment type="similarity">
    <text evidence="2">Belongs to the universal ribosomal protein uS19 family.</text>
</comment>
<keyword id="KW-0150">Chloroplast</keyword>
<keyword id="KW-0934">Plastid</keyword>
<keyword id="KW-0687">Ribonucleoprotein</keyword>
<keyword id="KW-0689">Ribosomal protein</keyword>
<keyword id="KW-0694">RNA-binding</keyword>
<keyword id="KW-0699">rRNA-binding</keyword>
<reference key="1">
    <citation type="journal article" date="1994" name="Proc. Natl. Acad. Sci. U.S.A.">
        <title>Loss of all ndh genes as determined by sequencing the entire chloroplast genome of the black pine Pinus thunbergii.</title>
        <authorList>
            <person name="Wakasugi T."/>
            <person name="Tsudzuki J."/>
            <person name="Ito S."/>
            <person name="Nakashima K."/>
            <person name="Tsudzuki T."/>
            <person name="Sugiura M."/>
        </authorList>
    </citation>
    <scope>NUCLEOTIDE SEQUENCE [LARGE SCALE GENOMIC DNA]</scope>
</reference>
<evidence type="ECO:0000250" key="1"/>
<evidence type="ECO:0000305" key="2"/>
<gene>
    <name type="primary">rps19</name>
</gene>
<geneLocation type="chloroplast"/>
<feature type="chain" id="PRO_0000129985" description="Small ribosomal subunit protein uS19c">
    <location>
        <begin position="1"/>
        <end position="92"/>
    </location>
</feature>
<proteinExistence type="inferred from homology"/>
<sequence length="92" mass="10576">MARSLKKNPFVANHSLRKIKNLNIKEEKKIIVTWSRASVIVPAMIGHTIAVHNGREHLPIYVTDRMVDHKLGEFAPTLLFQGHARNDKKSRR</sequence>
<dbReference type="EMBL" id="D17510">
    <property type="protein sequence ID" value="BAA04405.1"/>
    <property type="molecule type" value="Genomic_DNA"/>
</dbReference>
<dbReference type="PIR" id="T07528">
    <property type="entry name" value="T07528"/>
</dbReference>
<dbReference type="RefSeq" id="NP_042449.1">
    <property type="nucleotide sequence ID" value="NC_001631.1"/>
</dbReference>
<dbReference type="SMR" id="P52776"/>
<dbReference type="GeneID" id="809077"/>
<dbReference type="GO" id="GO:0009507">
    <property type="term" value="C:chloroplast"/>
    <property type="evidence" value="ECO:0007669"/>
    <property type="project" value="UniProtKB-SubCell"/>
</dbReference>
<dbReference type="GO" id="GO:0005763">
    <property type="term" value="C:mitochondrial small ribosomal subunit"/>
    <property type="evidence" value="ECO:0007669"/>
    <property type="project" value="TreeGrafter"/>
</dbReference>
<dbReference type="GO" id="GO:0019843">
    <property type="term" value="F:rRNA binding"/>
    <property type="evidence" value="ECO:0007669"/>
    <property type="project" value="UniProtKB-UniRule"/>
</dbReference>
<dbReference type="GO" id="GO:0003735">
    <property type="term" value="F:structural constituent of ribosome"/>
    <property type="evidence" value="ECO:0007669"/>
    <property type="project" value="InterPro"/>
</dbReference>
<dbReference type="GO" id="GO:0000028">
    <property type="term" value="P:ribosomal small subunit assembly"/>
    <property type="evidence" value="ECO:0007669"/>
    <property type="project" value="TreeGrafter"/>
</dbReference>
<dbReference type="GO" id="GO:0006412">
    <property type="term" value="P:translation"/>
    <property type="evidence" value="ECO:0007669"/>
    <property type="project" value="UniProtKB-UniRule"/>
</dbReference>
<dbReference type="FunFam" id="3.30.860.10:FF:000001">
    <property type="entry name" value="30S ribosomal protein S19"/>
    <property type="match status" value="1"/>
</dbReference>
<dbReference type="Gene3D" id="3.30.860.10">
    <property type="entry name" value="30s Ribosomal Protein S19, Chain A"/>
    <property type="match status" value="1"/>
</dbReference>
<dbReference type="HAMAP" id="MF_00531">
    <property type="entry name" value="Ribosomal_uS19"/>
    <property type="match status" value="1"/>
</dbReference>
<dbReference type="InterPro" id="IPR002222">
    <property type="entry name" value="Ribosomal_uS19"/>
</dbReference>
<dbReference type="InterPro" id="IPR005732">
    <property type="entry name" value="Ribosomal_uS19_bac-type"/>
</dbReference>
<dbReference type="InterPro" id="IPR020934">
    <property type="entry name" value="Ribosomal_uS19_CS"/>
</dbReference>
<dbReference type="InterPro" id="IPR023575">
    <property type="entry name" value="Ribosomal_uS19_SF"/>
</dbReference>
<dbReference type="NCBIfam" id="TIGR01050">
    <property type="entry name" value="rpsS_bact"/>
    <property type="match status" value="1"/>
</dbReference>
<dbReference type="PANTHER" id="PTHR11880">
    <property type="entry name" value="RIBOSOMAL PROTEIN S19P FAMILY MEMBER"/>
    <property type="match status" value="1"/>
</dbReference>
<dbReference type="PANTHER" id="PTHR11880:SF8">
    <property type="entry name" value="SMALL RIBOSOMAL SUBUNIT PROTEIN US19M"/>
    <property type="match status" value="1"/>
</dbReference>
<dbReference type="Pfam" id="PF00203">
    <property type="entry name" value="Ribosomal_S19"/>
    <property type="match status" value="1"/>
</dbReference>
<dbReference type="PIRSF" id="PIRSF002144">
    <property type="entry name" value="Ribosomal_S19"/>
    <property type="match status" value="1"/>
</dbReference>
<dbReference type="PRINTS" id="PR00975">
    <property type="entry name" value="RIBOSOMALS19"/>
</dbReference>
<dbReference type="SUPFAM" id="SSF54570">
    <property type="entry name" value="Ribosomal protein S19"/>
    <property type="match status" value="1"/>
</dbReference>
<dbReference type="PROSITE" id="PS00323">
    <property type="entry name" value="RIBOSOMAL_S19"/>
    <property type="match status" value="1"/>
</dbReference>
<accession>P52776</accession>
<organism>
    <name type="scientific">Pinus thunbergii</name>
    <name type="common">Japanese black pine</name>
    <name type="synonym">Pinus thunbergiana</name>
    <dbReference type="NCBI Taxonomy" id="3350"/>
    <lineage>
        <taxon>Eukaryota</taxon>
        <taxon>Viridiplantae</taxon>
        <taxon>Streptophyta</taxon>
        <taxon>Embryophyta</taxon>
        <taxon>Tracheophyta</taxon>
        <taxon>Spermatophyta</taxon>
        <taxon>Pinopsida</taxon>
        <taxon>Pinidae</taxon>
        <taxon>Conifers I</taxon>
        <taxon>Pinales</taxon>
        <taxon>Pinaceae</taxon>
        <taxon>Pinus</taxon>
        <taxon>Pinus subgen. Pinus</taxon>
    </lineage>
</organism>